<comment type="function">
    <text evidence="1">An essential GTPase that binds both GDP and GTP, with rapid nucleotide exchange. Plays a role in 16S rRNA processing and 30S ribosomal subunit biogenesis and possibly also in cell cycle regulation and energy metabolism.</text>
</comment>
<comment type="subunit">
    <text evidence="1">Monomer.</text>
</comment>
<comment type="subcellular location">
    <subcellularLocation>
        <location>Cytoplasm</location>
    </subcellularLocation>
    <subcellularLocation>
        <location evidence="1">Cell inner membrane</location>
        <topology evidence="1">Peripheral membrane protein</topology>
    </subcellularLocation>
</comment>
<comment type="similarity">
    <text evidence="1 2">Belongs to the TRAFAC class TrmE-Era-EngA-EngB-Septin-like GTPase superfamily. Era GTPase family.</text>
</comment>
<feature type="chain" id="PRO_1000079735" description="GTPase Era">
    <location>
        <begin position="1"/>
        <end position="301"/>
    </location>
</feature>
<feature type="domain" description="Era-type G" evidence="2">
    <location>
        <begin position="7"/>
        <end position="175"/>
    </location>
</feature>
<feature type="domain" description="KH type-2" evidence="1">
    <location>
        <begin position="206"/>
        <end position="283"/>
    </location>
</feature>
<feature type="region of interest" description="G1" evidence="2">
    <location>
        <begin position="15"/>
        <end position="22"/>
    </location>
</feature>
<feature type="region of interest" description="G2" evidence="2">
    <location>
        <begin position="41"/>
        <end position="45"/>
    </location>
</feature>
<feature type="region of interest" description="G3" evidence="2">
    <location>
        <begin position="62"/>
        <end position="65"/>
    </location>
</feature>
<feature type="region of interest" description="G4" evidence="2">
    <location>
        <begin position="124"/>
        <end position="127"/>
    </location>
</feature>
<feature type="region of interest" description="G5" evidence="2">
    <location>
        <begin position="154"/>
        <end position="156"/>
    </location>
</feature>
<feature type="binding site" evidence="1">
    <location>
        <begin position="15"/>
        <end position="22"/>
    </location>
    <ligand>
        <name>GTP</name>
        <dbReference type="ChEBI" id="CHEBI:37565"/>
    </ligand>
</feature>
<feature type="binding site" evidence="1">
    <location>
        <begin position="62"/>
        <end position="66"/>
    </location>
    <ligand>
        <name>GTP</name>
        <dbReference type="ChEBI" id="CHEBI:37565"/>
    </ligand>
</feature>
<feature type="binding site" evidence="1">
    <location>
        <begin position="124"/>
        <end position="127"/>
    </location>
    <ligand>
        <name>GTP</name>
        <dbReference type="ChEBI" id="CHEBI:37565"/>
    </ligand>
</feature>
<sequence>MSIDKSYCGFIAIVGRPNVGKSTLLNKLLGQKISITSRKAQTTRHRIVGIHTEGAYQAIYVDTPGLHMEEKRAINRLMNKAASSSIGDVELVIFVVEGTRWTLDDEMVLNKLRDGKAPVILAVNKVDNVQEKADLLPHLQFLASQMNFLDIVPISAETGLNVDTIAAIVRKHLPEATHHFPEDYITDRSQRFMASEIIREKLMRFLGAELPYSVTVEIERFVSNERGGYDINGLILVEREGQKKMVIGNKGAKIKTIGIEARKDMQEMFEAPVHLELWVKVKSGWADDERALRSLGYVDDL</sequence>
<evidence type="ECO:0000255" key="1">
    <source>
        <dbReference type="HAMAP-Rule" id="MF_00367"/>
    </source>
</evidence>
<evidence type="ECO:0000255" key="2">
    <source>
        <dbReference type="PROSITE-ProRule" id="PRU01050"/>
    </source>
</evidence>
<organism>
    <name type="scientific">Shigella dysenteriae serotype 1 (strain Sd197)</name>
    <dbReference type="NCBI Taxonomy" id="300267"/>
    <lineage>
        <taxon>Bacteria</taxon>
        <taxon>Pseudomonadati</taxon>
        <taxon>Pseudomonadota</taxon>
        <taxon>Gammaproteobacteria</taxon>
        <taxon>Enterobacterales</taxon>
        <taxon>Enterobacteriaceae</taxon>
        <taxon>Shigella</taxon>
    </lineage>
</organism>
<reference key="1">
    <citation type="journal article" date="2005" name="Nucleic Acids Res.">
        <title>Genome dynamics and diversity of Shigella species, the etiologic agents of bacillary dysentery.</title>
        <authorList>
            <person name="Yang F."/>
            <person name="Yang J."/>
            <person name="Zhang X."/>
            <person name="Chen L."/>
            <person name="Jiang Y."/>
            <person name="Yan Y."/>
            <person name="Tang X."/>
            <person name="Wang J."/>
            <person name="Xiong Z."/>
            <person name="Dong J."/>
            <person name="Xue Y."/>
            <person name="Zhu Y."/>
            <person name="Xu X."/>
            <person name="Sun L."/>
            <person name="Chen S."/>
            <person name="Nie H."/>
            <person name="Peng J."/>
            <person name="Xu J."/>
            <person name="Wang Y."/>
            <person name="Yuan Z."/>
            <person name="Wen Y."/>
            <person name="Yao Z."/>
            <person name="Shen Y."/>
            <person name="Qiang B."/>
            <person name="Hou Y."/>
            <person name="Yu J."/>
            <person name="Jin Q."/>
        </authorList>
    </citation>
    <scope>NUCLEOTIDE SEQUENCE [LARGE SCALE GENOMIC DNA]</scope>
    <source>
        <strain>Sd197</strain>
    </source>
</reference>
<proteinExistence type="inferred from homology"/>
<dbReference type="EMBL" id="CP000034">
    <property type="protein sequence ID" value="ABB62850.1"/>
    <property type="molecule type" value="Genomic_DNA"/>
</dbReference>
<dbReference type="RefSeq" id="WP_000020733.1">
    <property type="nucleotide sequence ID" value="NC_007606.1"/>
</dbReference>
<dbReference type="RefSeq" id="YP_404341.1">
    <property type="nucleotide sequence ID" value="NC_007606.1"/>
</dbReference>
<dbReference type="SMR" id="Q32CV5"/>
<dbReference type="STRING" id="300267.SDY_2807"/>
<dbReference type="EnsemblBacteria" id="ABB62850">
    <property type="protein sequence ID" value="ABB62850"/>
    <property type="gene ID" value="SDY_2807"/>
</dbReference>
<dbReference type="KEGG" id="sdy:SDY_2807"/>
<dbReference type="PATRIC" id="fig|300267.13.peg.3382"/>
<dbReference type="HOGENOM" id="CLU_038009_1_2_6"/>
<dbReference type="Proteomes" id="UP000002716">
    <property type="component" value="Chromosome"/>
</dbReference>
<dbReference type="GO" id="GO:0005829">
    <property type="term" value="C:cytosol"/>
    <property type="evidence" value="ECO:0007669"/>
    <property type="project" value="TreeGrafter"/>
</dbReference>
<dbReference type="GO" id="GO:0005886">
    <property type="term" value="C:plasma membrane"/>
    <property type="evidence" value="ECO:0007669"/>
    <property type="project" value="UniProtKB-SubCell"/>
</dbReference>
<dbReference type="GO" id="GO:0005525">
    <property type="term" value="F:GTP binding"/>
    <property type="evidence" value="ECO:0007669"/>
    <property type="project" value="UniProtKB-UniRule"/>
</dbReference>
<dbReference type="GO" id="GO:0003924">
    <property type="term" value="F:GTPase activity"/>
    <property type="evidence" value="ECO:0007669"/>
    <property type="project" value="UniProtKB-UniRule"/>
</dbReference>
<dbReference type="GO" id="GO:0043024">
    <property type="term" value="F:ribosomal small subunit binding"/>
    <property type="evidence" value="ECO:0007669"/>
    <property type="project" value="TreeGrafter"/>
</dbReference>
<dbReference type="GO" id="GO:0070181">
    <property type="term" value="F:small ribosomal subunit rRNA binding"/>
    <property type="evidence" value="ECO:0007669"/>
    <property type="project" value="UniProtKB-UniRule"/>
</dbReference>
<dbReference type="GO" id="GO:0000028">
    <property type="term" value="P:ribosomal small subunit assembly"/>
    <property type="evidence" value="ECO:0007669"/>
    <property type="project" value="TreeGrafter"/>
</dbReference>
<dbReference type="CDD" id="cd04163">
    <property type="entry name" value="Era"/>
    <property type="match status" value="1"/>
</dbReference>
<dbReference type="CDD" id="cd22534">
    <property type="entry name" value="KH-II_Era"/>
    <property type="match status" value="1"/>
</dbReference>
<dbReference type="FunFam" id="3.30.300.20:FF:000003">
    <property type="entry name" value="GTPase Era"/>
    <property type="match status" value="1"/>
</dbReference>
<dbReference type="FunFam" id="3.40.50.300:FF:000094">
    <property type="entry name" value="GTPase Era"/>
    <property type="match status" value="1"/>
</dbReference>
<dbReference type="Gene3D" id="3.30.300.20">
    <property type="match status" value="1"/>
</dbReference>
<dbReference type="Gene3D" id="3.40.50.300">
    <property type="entry name" value="P-loop containing nucleotide triphosphate hydrolases"/>
    <property type="match status" value="1"/>
</dbReference>
<dbReference type="HAMAP" id="MF_00367">
    <property type="entry name" value="GTPase_Era"/>
    <property type="match status" value="1"/>
</dbReference>
<dbReference type="InterPro" id="IPR030388">
    <property type="entry name" value="G_ERA_dom"/>
</dbReference>
<dbReference type="InterPro" id="IPR006073">
    <property type="entry name" value="GTP-bd"/>
</dbReference>
<dbReference type="InterPro" id="IPR005662">
    <property type="entry name" value="GTPase_Era-like"/>
</dbReference>
<dbReference type="InterPro" id="IPR015946">
    <property type="entry name" value="KH_dom-like_a/b"/>
</dbReference>
<dbReference type="InterPro" id="IPR004044">
    <property type="entry name" value="KH_dom_type_2"/>
</dbReference>
<dbReference type="InterPro" id="IPR009019">
    <property type="entry name" value="KH_sf_prok-type"/>
</dbReference>
<dbReference type="InterPro" id="IPR027417">
    <property type="entry name" value="P-loop_NTPase"/>
</dbReference>
<dbReference type="InterPro" id="IPR005225">
    <property type="entry name" value="Small_GTP-bd"/>
</dbReference>
<dbReference type="NCBIfam" id="TIGR00436">
    <property type="entry name" value="era"/>
    <property type="match status" value="1"/>
</dbReference>
<dbReference type="NCBIfam" id="NF000908">
    <property type="entry name" value="PRK00089.1"/>
    <property type="match status" value="1"/>
</dbReference>
<dbReference type="NCBIfam" id="TIGR00231">
    <property type="entry name" value="small_GTP"/>
    <property type="match status" value="1"/>
</dbReference>
<dbReference type="PANTHER" id="PTHR42698">
    <property type="entry name" value="GTPASE ERA"/>
    <property type="match status" value="1"/>
</dbReference>
<dbReference type="PANTHER" id="PTHR42698:SF1">
    <property type="entry name" value="GTPASE ERA, MITOCHONDRIAL"/>
    <property type="match status" value="1"/>
</dbReference>
<dbReference type="Pfam" id="PF07650">
    <property type="entry name" value="KH_2"/>
    <property type="match status" value="1"/>
</dbReference>
<dbReference type="Pfam" id="PF01926">
    <property type="entry name" value="MMR_HSR1"/>
    <property type="match status" value="1"/>
</dbReference>
<dbReference type="SUPFAM" id="SSF52540">
    <property type="entry name" value="P-loop containing nucleoside triphosphate hydrolases"/>
    <property type="match status" value="1"/>
</dbReference>
<dbReference type="SUPFAM" id="SSF54814">
    <property type="entry name" value="Prokaryotic type KH domain (KH-domain type II)"/>
    <property type="match status" value="1"/>
</dbReference>
<dbReference type="PROSITE" id="PS51713">
    <property type="entry name" value="G_ERA"/>
    <property type="match status" value="1"/>
</dbReference>
<dbReference type="PROSITE" id="PS50823">
    <property type="entry name" value="KH_TYPE_2"/>
    <property type="match status" value="1"/>
</dbReference>
<protein>
    <recommendedName>
        <fullName evidence="1">GTPase Era</fullName>
    </recommendedName>
</protein>
<keyword id="KW-0997">Cell inner membrane</keyword>
<keyword id="KW-1003">Cell membrane</keyword>
<keyword id="KW-0963">Cytoplasm</keyword>
<keyword id="KW-0342">GTP-binding</keyword>
<keyword id="KW-0472">Membrane</keyword>
<keyword id="KW-0547">Nucleotide-binding</keyword>
<keyword id="KW-1185">Reference proteome</keyword>
<keyword id="KW-0690">Ribosome biogenesis</keyword>
<keyword id="KW-0694">RNA-binding</keyword>
<keyword id="KW-0699">rRNA-binding</keyword>
<gene>
    <name evidence="1" type="primary">era</name>
    <name type="ordered locus">SDY_2807</name>
</gene>
<accession>Q32CV5</accession>
<name>ERA_SHIDS</name>